<name>VP53_BPAPS</name>
<keyword id="KW-1185">Reference proteome</keyword>
<reference key="1">
    <citation type="journal article" date="1999" name="Virology">
        <title>Isolation and characterization of APSE-1, a bacteriophage infecting the secondary endosymbiont of acyrthosiphon pisum.</title>
        <authorList>
            <person name="van der Wilk F."/>
            <person name="Dullemans A.M."/>
            <person name="Verbeek M."/>
            <person name="van den Heuvel J.F.J.M."/>
        </authorList>
    </citation>
    <scope>NUCLEOTIDE SEQUENCE [LARGE SCALE GENOMIC DNA]</scope>
</reference>
<sequence>MLTANTPLLARLAENHTQMLMAHNQLTEAHTMLISQLVVQFEHDPHEPTEANKPKPFAQDVKPQPVAPSVIVEPKVVIEPAPVVEAHTKADDKPAPVVAEKKGKVAKAETKPAKAVKPMVEDPKVAPEPEPVDIESLDLRHVVSLSVLFGDKAVKPDHTQVAKAKATFAAEKADGVTGQIDALYCALNGISNIKTLSKTSTFDLCLKMLANWDNLFGITERREFALSLLHELPTPTEVKPIDFNALRSEASARITQLVKGGYRNEALDILASFNAKKLGDVTDDNLARFIEKAQSVLSDDKSEGSDG</sequence>
<proteinExistence type="predicted"/>
<organismHost>
    <name type="scientific">Escherichia coli</name>
    <dbReference type="NCBI Taxonomy" id="562"/>
</organismHost>
<evidence type="ECO:0000256" key="1">
    <source>
        <dbReference type="SAM" id="MobiDB-lite"/>
    </source>
</evidence>
<accession>Q9T1P5</accession>
<dbReference type="EMBL" id="AF157835">
    <property type="protein sequence ID" value="AAF03996.1"/>
    <property type="molecule type" value="Genomic_DNA"/>
</dbReference>
<dbReference type="RefSeq" id="NP_051014.1">
    <property type="nucleotide sequence ID" value="NC_000935.1"/>
</dbReference>
<dbReference type="KEGG" id="vg:1262347"/>
<dbReference type="Proteomes" id="UP000000853">
    <property type="component" value="Genome"/>
</dbReference>
<gene>
    <name type="primary">53</name>
</gene>
<organism>
    <name type="scientific">Acyrthosiphon pisum secondary endosymbiont phage 1</name>
    <name type="common">Bacteriophage APSE-1</name>
    <dbReference type="NCBI Taxonomy" id="2682836"/>
    <lineage>
        <taxon>Viruses</taxon>
        <taxon>Duplodnaviria</taxon>
        <taxon>Heunggongvirae</taxon>
        <taxon>Uroviricota</taxon>
        <taxon>Caudoviricetes</taxon>
        <taxon>Sendosyvirus</taxon>
        <taxon>Sendosyvirus APSE1</taxon>
    </lineage>
</organism>
<protein>
    <recommendedName>
        <fullName>Putative protein p53</fullName>
    </recommendedName>
</protein>
<feature type="chain" id="PRO_0000077877" description="Putative protein p53">
    <location>
        <begin position="1"/>
        <end position="307"/>
    </location>
</feature>
<feature type="region of interest" description="Disordered" evidence="1">
    <location>
        <begin position="44"/>
        <end position="64"/>
    </location>
</feature>
<feature type="region of interest" description="Disordered" evidence="1">
    <location>
        <begin position="109"/>
        <end position="129"/>
    </location>
</feature>
<feature type="compositionally biased region" description="Basic and acidic residues" evidence="1">
    <location>
        <begin position="44"/>
        <end position="53"/>
    </location>
</feature>